<evidence type="ECO:0000255" key="1">
    <source>
        <dbReference type="HAMAP-Rule" id="MF_01703"/>
    </source>
</evidence>
<proteinExistence type="inferred from homology"/>
<gene>
    <name evidence="1" type="primary">msbA</name>
    <name type="synonym">valA</name>
    <name type="ordered locus">FTT_0109</name>
</gene>
<comment type="function">
    <text evidence="1">Involved in lipopolysaccharide (LPS) biosynthesis. Translocates lipid A-core from the inner to the outer leaflet of the inner membrane. Transmembrane domains (TMD) form a pore in the inner membrane and the ATP-binding domain (NBD) is responsible for energy generation.</text>
</comment>
<comment type="catalytic activity">
    <reaction evidence="1">
        <text>ATP + H2O + lipid A-core oligosaccharideSide 1 = ADP + phosphate + lipid A-core oligosaccharideSide 2.</text>
        <dbReference type="EC" id="7.5.2.6"/>
    </reaction>
</comment>
<comment type="subunit">
    <text evidence="1">Homodimer.</text>
</comment>
<comment type="subcellular location">
    <subcellularLocation>
        <location evidence="1">Cell inner membrane</location>
        <topology evidence="1">Multi-pass membrane protein</topology>
    </subcellularLocation>
</comment>
<comment type="domain">
    <text evidence="1">In MsbA the ATP-binding domain (NBD) and the transmembrane domain (TMD) are fused.</text>
</comment>
<comment type="similarity">
    <text evidence="1">Belongs to the ABC transporter superfamily. Lipid exporter (TC 3.A.1.106) family.</text>
</comment>
<dbReference type="EC" id="7.5.2.6" evidence="1"/>
<dbReference type="EMBL" id="AJ749949">
    <property type="protein sequence ID" value="CAG44742.1"/>
    <property type="molecule type" value="Genomic_DNA"/>
</dbReference>
<dbReference type="RefSeq" id="WP_003019850.1">
    <property type="nucleotide sequence ID" value="NC_006570.2"/>
</dbReference>
<dbReference type="RefSeq" id="YP_169179.1">
    <property type="nucleotide sequence ID" value="NC_006570.2"/>
</dbReference>
<dbReference type="SMR" id="Q5NIG3"/>
<dbReference type="IntAct" id="Q5NIG3">
    <property type="interactions" value="2"/>
</dbReference>
<dbReference type="STRING" id="177416.FTT_0109"/>
<dbReference type="DNASU" id="3191929"/>
<dbReference type="EnsemblBacteria" id="CAG44742">
    <property type="protein sequence ID" value="CAG44742"/>
    <property type="gene ID" value="FTT_0109"/>
</dbReference>
<dbReference type="KEGG" id="ftu:FTT_0109"/>
<dbReference type="eggNOG" id="COG1132">
    <property type="taxonomic scope" value="Bacteria"/>
</dbReference>
<dbReference type="OrthoDB" id="6336411at2"/>
<dbReference type="Proteomes" id="UP000001174">
    <property type="component" value="Chromosome"/>
</dbReference>
<dbReference type="GO" id="GO:0005886">
    <property type="term" value="C:plasma membrane"/>
    <property type="evidence" value="ECO:0007669"/>
    <property type="project" value="UniProtKB-SubCell"/>
</dbReference>
<dbReference type="GO" id="GO:0140359">
    <property type="term" value="F:ABC-type transporter activity"/>
    <property type="evidence" value="ECO:0007669"/>
    <property type="project" value="InterPro"/>
</dbReference>
<dbReference type="GO" id="GO:0005524">
    <property type="term" value="F:ATP binding"/>
    <property type="evidence" value="ECO:0007669"/>
    <property type="project" value="UniProtKB-KW"/>
</dbReference>
<dbReference type="GO" id="GO:0016887">
    <property type="term" value="F:ATP hydrolysis activity"/>
    <property type="evidence" value="ECO:0007669"/>
    <property type="project" value="InterPro"/>
</dbReference>
<dbReference type="GO" id="GO:0034040">
    <property type="term" value="F:ATPase-coupled lipid transmembrane transporter activity"/>
    <property type="evidence" value="ECO:0007669"/>
    <property type="project" value="InterPro"/>
</dbReference>
<dbReference type="CDD" id="cd18552">
    <property type="entry name" value="ABC_6TM_MsbA_like"/>
    <property type="match status" value="1"/>
</dbReference>
<dbReference type="FunFam" id="3.40.50.300:FF:000140">
    <property type="entry name" value="Lipid A export ATP-binding/permease protein MsbA"/>
    <property type="match status" value="1"/>
</dbReference>
<dbReference type="Gene3D" id="1.20.1560.10">
    <property type="entry name" value="ABC transporter type 1, transmembrane domain"/>
    <property type="match status" value="1"/>
</dbReference>
<dbReference type="Gene3D" id="3.40.50.300">
    <property type="entry name" value="P-loop containing nucleotide triphosphate hydrolases"/>
    <property type="match status" value="1"/>
</dbReference>
<dbReference type="InterPro" id="IPR003593">
    <property type="entry name" value="AAA+_ATPase"/>
</dbReference>
<dbReference type="InterPro" id="IPR011527">
    <property type="entry name" value="ABC1_TM_dom"/>
</dbReference>
<dbReference type="InterPro" id="IPR036640">
    <property type="entry name" value="ABC1_TM_sf"/>
</dbReference>
<dbReference type="InterPro" id="IPR003439">
    <property type="entry name" value="ABC_transporter-like_ATP-bd"/>
</dbReference>
<dbReference type="InterPro" id="IPR017871">
    <property type="entry name" value="ABC_transporter-like_CS"/>
</dbReference>
<dbReference type="InterPro" id="IPR011917">
    <property type="entry name" value="ABC_transpr_lipidA"/>
</dbReference>
<dbReference type="InterPro" id="IPR027417">
    <property type="entry name" value="P-loop_NTPase"/>
</dbReference>
<dbReference type="InterPro" id="IPR039421">
    <property type="entry name" value="Type_1_exporter"/>
</dbReference>
<dbReference type="NCBIfam" id="TIGR02203">
    <property type="entry name" value="MsbA_lipidA"/>
    <property type="match status" value="1"/>
</dbReference>
<dbReference type="PANTHER" id="PTHR24221">
    <property type="entry name" value="ATP-BINDING CASSETTE SUB-FAMILY B"/>
    <property type="match status" value="1"/>
</dbReference>
<dbReference type="PANTHER" id="PTHR24221:SF632">
    <property type="entry name" value="ATP-DEPENDENT LIPID A-CORE FLIPPASE"/>
    <property type="match status" value="1"/>
</dbReference>
<dbReference type="Pfam" id="PF00664">
    <property type="entry name" value="ABC_membrane"/>
    <property type="match status" value="1"/>
</dbReference>
<dbReference type="Pfam" id="PF00005">
    <property type="entry name" value="ABC_tran"/>
    <property type="match status" value="1"/>
</dbReference>
<dbReference type="SMART" id="SM00382">
    <property type="entry name" value="AAA"/>
    <property type="match status" value="1"/>
</dbReference>
<dbReference type="SUPFAM" id="SSF90123">
    <property type="entry name" value="ABC transporter transmembrane region"/>
    <property type="match status" value="1"/>
</dbReference>
<dbReference type="SUPFAM" id="SSF52540">
    <property type="entry name" value="P-loop containing nucleoside triphosphate hydrolases"/>
    <property type="match status" value="1"/>
</dbReference>
<dbReference type="PROSITE" id="PS50929">
    <property type="entry name" value="ABC_TM1F"/>
    <property type="match status" value="1"/>
</dbReference>
<dbReference type="PROSITE" id="PS00211">
    <property type="entry name" value="ABC_TRANSPORTER_1"/>
    <property type="match status" value="1"/>
</dbReference>
<dbReference type="PROSITE" id="PS50893">
    <property type="entry name" value="ABC_TRANSPORTER_2"/>
    <property type="match status" value="1"/>
</dbReference>
<dbReference type="PROSITE" id="PS51239">
    <property type="entry name" value="MSBA"/>
    <property type="match status" value="1"/>
</dbReference>
<organism>
    <name type="scientific">Francisella tularensis subsp. tularensis (strain SCHU S4 / Schu 4)</name>
    <dbReference type="NCBI Taxonomy" id="177416"/>
    <lineage>
        <taxon>Bacteria</taxon>
        <taxon>Pseudomonadati</taxon>
        <taxon>Pseudomonadota</taxon>
        <taxon>Gammaproteobacteria</taxon>
        <taxon>Thiotrichales</taxon>
        <taxon>Francisellaceae</taxon>
        <taxon>Francisella</taxon>
    </lineage>
</organism>
<protein>
    <recommendedName>
        <fullName evidence="1">ATP-dependent lipid A-core flippase</fullName>
        <ecNumber evidence="1">7.5.2.6</ecNumber>
    </recommendedName>
    <alternativeName>
        <fullName evidence="1">Lipid A export ATP-binding/permease protein MsbA</fullName>
    </alternativeName>
</protein>
<sequence>MANMIDKIDLKSQGSSNLSGEMTNHQKVGTLYKRLLLQVKHLWHFLLLAAIGSIFFSAADASMIYLINPILNYGFGPGGGITKQSATILMLMGVGMVGLLALRSVGSFVSQYFIGSLGQKVVYKFRKDIYKRLMDLPASFFDKHSTGQIISRLLYNVDQVIEATSTAIITVVQDGTFVIGLIVVMFVSSWQLSLFLIVVGPFLGLFISIINKKFRNLSRNTQSSMGNVTHTAEETIRNYKEIRIFGAQQKQQNKFFKNLDYTYSQQIRTIALDALTSPVIQIIASLVLAFSLFTIAIFGTNEGDGSSWLTAGSFASFFAAAAAILKPIKNLTKVNVVIQKAVAATEDIFYILDYPAEKETGSKELAKVDGNVTIKDLSFAFGEHKVLSGVSVDIKAGQTVAFVGKSGSGKTTLTSIISRFYTQHEGEILLDGVDTRELTLENLRSHLSIVSQNVHLFDDTVYNNIAFGLSREVSEEEVIDALKRANAYEFVQELSDGINTNIGNNGSKLSGGQRQRISIARALLKNAPVLIFDEATSALDNESERVVQQALESLTKSCTTIVIAHRLSTVENADKIVVMDGGRVVESGKHQELLEQGGLYTRLYQSGLQ</sequence>
<keyword id="KW-0067">ATP-binding</keyword>
<keyword id="KW-0997">Cell inner membrane</keyword>
<keyword id="KW-1003">Cell membrane</keyword>
<keyword id="KW-0445">Lipid transport</keyword>
<keyword id="KW-0472">Membrane</keyword>
<keyword id="KW-0547">Nucleotide-binding</keyword>
<keyword id="KW-1185">Reference proteome</keyword>
<keyword id="KW-1278">Translocase</keyword>
<keyword id="KW-0812">Transmembrane</keyword>
<keyword id="KW-1133">Transmembrane helix</keyword>
<keyword id="KW-0813">Transport</keyword>
<accession>Q5NIG3</accession>
<feature type="chain" id="PRO_0000271627" description="ATP-dependent lipid A-core flippase">
    <location>
        <begin position="1"/>
        <end position="609"/>
    </location>
</feature>
<feature type="transmembrane region" description="Helical" evidence="1">
    <location>
        <begin position="47"/>
        <end position="67"/>
    </location>
</feature>
<feature type="transmembrane region" description="Helical" evidence="1">
    <location>
        <begin position="88"/>
        <end position="108"/>
    </location>
</feature>
<feature type="transmembrane region" description="Helical" evidence="1">
    <location>
        <begin position="167"/>
        <end position="187"/>
    </location>
</feature>
<feature type="transmembrane region" description="Helical" evidence="1">
    <location>
        <begin position="190"/>
        <end position="210"/>
    </location>
</feature>
<feature type="transmembrane region" description="Helical" evidence="1">
    <location>
        <begin position="279"/>
        <end position="299"/>
    </location>
</feature>
<feature type="transmembrane region" description="Helical" evidence="1">
    <location>
        <begin position="305"/>
        <end position="325"/>
    </location>
</feature>
<feature type="domain" description="ABC transmembrane type-1" evidence="1">
    <location>
        <begin position="47"/>
        <end position="340"/>
    </location>
</feature>
<feature type="domain" description="ABC transporter" evidence="1">
    <location>
        <begin position="372"/>
        <end position="606"/>
    </location>
</feature>
<feature type="binding site" evidence="1">
    <location>
        <begin position="404"/>
        <end position="411"/>
    </location>
    <ligand>
        <name>ATP</name>
        <dbReference type="ChEBI" id="CHEBI:30616"/>
    </ligand>
</feature>
<name>MSBA_FRATT</name>
<reference key="1">
    <citation type="journal article" date="2005" name="Nat. Genet.">
        <title>The complete genome sequence of Francisella tularensis, the causative agent of tularemia.</title>
        <authorList>
            <person name="Larsson P."/>
            <person name="Oyston P.C.F."/>
            <person name="Chain P."/>
            <person name="Chu M.C."/>
            <person name="Duffield M."/>
            <person name="Fuxelius H.-H."/>
            <person name="Garcia E."/>
            <person name="Haelltorp G."/>
            <person name="Johansson D."/>
            <person name="Isherwood K.E."/>
            <person name="Karp P.D."/>
            <person name="Larsson E."/>
            <person name="Liu Y."/>
            <person name="Michell S."/>
            <person name="Prior J."/>
            <person name="Prior R."/>
            <person name="Malfatti S."/>
            <person name="Sjoestedt A."/>
            <person name="Svensson K."/>
            <person name="Thompson N."/>
            <person name="Vergez L."/>
            <person name="Wagg J.K."/>
            <person name="Wren B.W."/>
            <person name="Lindler L.E."/>
            <person name="Andersson S.G.E."/>
            <person name="Forsman M."/>
            <person name="Titball R.W."/>
        </authorList>
    </citation>
    <scope>NUCLEOTIDE SEQUENCE [LARGE SCALE GENOMIC DNA]</scope>
    <source>
        <strain>SCHU S4 / Schu 4</strain>
    </source>
</reference>